<proteinExistence type="inferred from homology"/>
<keyword id="KW-0997">Cell inner membrane</keyword>
<keyword id="KW-1003">Cell membrane</keyword>
<keyword id="KW-0444">Lipid biosynthesis</keyword>
<keyword id="KW-0443">Lipid metabolism</keyword>
<keyword id="KW-0472">Membrane</keyword>
<keyword id="KW-0594">Phospholipid biosynthesis</keyword>
<keyword id="KW-1208">Phospholipid metabolism</keyword>
<keyword id="KW-1185">Reference proteome</keyword>
<keyword id="KW-0677">Repeat</keyword>
<keyword id="KW-0808">Transferase</keyword>
<keyword id="KW-0812">Transmembrane</keyword>
<keyword id="KW-1133">Transmembrane helix</keyword>
<sequence length="486" mass="54724">MTTFYTVVSWLVILGYWVLIAGVTLRILMKRRAVPSAMAWLLIIYILPLVGIIAYLSVGELHLGKRRAERARAMWPSTAKWLNDLKACKHIFAQENSSVASSLFKLCERRQGIAGVKGNQLQLLTDSDDVMQALIRDIQLARHNIEMVFYIWQPGGMADQVAESLMAAARRGIHCRLMLDSAGSVAFFRSPWAAMMRNAGIEVVEALKVNLMRVFLRRMDLRQHRKMVMIDNYIAYTGSMNMVDPRFFKQDAGVGQWVDLMARMEGPVATAMGIVYSCDWEIETGKRILPPSPDVNIMPFEQASGHTIHTIASGPGFPEDLIHQALLTATYAAREYLIMTTPYFVPSDDLLHAICTAAQRGVDVSIILPRKNDSLLVGWASRAFFSELLAAGVKIYQFEGGLLHTKSVLVDGELSLVGTVNLDMRSLWLNFEITLVIDDTGFGADLAAVQDDYISRSRLLDARLWVKRPLWQRITERLFYFFSPLL</sequence>
<comment type="function">
    <text evidence="1">Catalyzes the reversible phosphatidyl group transfer from one phosphatidylglycerol molecule to another to form cardiolipin (CL) (diphosphatidylglycerol) and glycerol.</text>
</comment>
<comment type="catalytic activity">
    <reaction evidence="1">
        <text>2 a 1,2-diacyl-sn-glycero-3-phospho-(1'-sn-glycerol) = a cardiolipin + glycerol</text>
        <dbReference type="Rhea" id="RHEA:31451"/>
        <dbReference type="ChEBI" id="CHEBI:17754"/>
        <dbReference type="ChEBI" id="CHEBI:62237"/>
        <dbReference type="ChEBI" id="CHEBI:64716"/>
    </reaction>
</comment>
<comment type="subcellular location">
    <subcellularLocation>
        <location evidence="1">Cell inner membrane</location>
        <topology evidence="1">Multi-pass membrane protein</topology>
    </subcellularLocation>
</comment>
<comment type="similarity">
    <text evidence="1">Belongs to the phospholipase D family. Cardiolipin synthase subfamily. ClsA sub-subfamily.</text>
</comment>
<dbReference type="EC" id="2.7.8.-" evidence="1"/>
<dbReference type="EMBL" id="CP000880">
    <property type="protein sequence ID" value="ABX21116.1"/>
    <property type="molecule type" value="Genomic_DNA"/>
</dbReference>
<dbReference type="SMR" id="A9MPD5"/>
<dbReference type="STRING" id="41514.SARI_01214"/>
<dbReference type="KEGG" id="ses:SARI_01214"/>
<dbReference type="HOGENOM" id="CLU_038053_1_0_6"/>
<dbReference type="Proteomes" id="UP000002084">
    <property type="component" value="Chromosome"/>
</dbReference>
<dbReference type="GO" id="GO:0005886">
    <property type="term" value="C:plasma membrane"/>
    <property type="evidence" value="ECO:0007669"/>
    <property type="project" value="UniProtKB-SubCell"/>
</dbReference>
<dbReference type="GO" id="GO:0008808">
    <property type="term" value="F:cardiolipin synthase activity"/>
    <property type="evidence" value="ECO:0007669"/>
    <property type="project" value="InterPro"/>
</dbReference>
<dbReference type="GO" id="GO:0032049">
    <property type="term" value="P:cardiolipin biosynthetic process"/>
    <property type="evidence" value="ECO:0007669"/>
    <property type="project" value="InterPro"/>
</dbReference>
<dbReference type="CDD" id="cd09152">
    <property type="entry name" value="PLDc_EcCLS_like_1"/>
    <property type="match status" value="1"/>
</dbReference>
<dbReference type="CDD" id="cd09158">
    <property type="entry name" value="PLDc_EcCLS_like_2"/>
    <property type="match status" value="1"/>
</dbReference>
<dbReference type="FunFam" id="3.30.870.10:FF:000002">
    <property type="entry name" value="Cardiolipin synthase A"/>
    <property type="match status" value="1"/>
</dbReference>
<dbReference type="FunFam" id="3.30.870.10:FF:000003">
    <property type="entry name" value="Cardiolipin synthase A"/>
    <property type="match status" value="1"/>
</dbReference>
<dbReference type="Gene3D" id="3.30.870.10">
    <property type="entry name" value="Endonuclease Chain A"/>
    <property type="match status" value="2"/>
</dbReference>
<dbReference type="HAMAP" id="MF_00190">
    <property type="entry name" value="Cardiolipin_synth_ClsA"/>
    <property type="match status" value="1"/>
</dbReference>
<dbReference type="InterPro" id="IPR022924">
    <property type="entry name" value="Cardiolipin_synthase"/>
</dbReference>
<dbReference type="InterPro" id="IPR030840">
    <property type="entry name" value="CL_synthase_A"/>
</dbReference>
<dbReference type="InterPro" id="IPR027379">
    <property type="entry name" value="CLS_N"/>
</dbReference>
<dbReference type="InterPro" id="IPR025202">
    <property type="entry name" value="PLD-like_dom"/>
</dbReference>
<dbReference type="InterPro" id="IPR001736">
    <property type="entry name" value="PLipase_D/transphosphatidylase"/>
</dbReference>
<dbReference type="NCBIfam" id="TIGR04265">
    <property type="entry name" value="bac_cardiolipin"/>
    <property type="match status" value="1"/>
</dbReference>
<dbReference type="PANTHER" id="PTHR21248">
    <property type="entry name" value="CARDIOLIPIN SYNTHASE"/>
    <property type="match status" value="1"/>
</dbReference>
<dbReference type="PANTHER" id="PTHR21248:SF22">
    <property type="entry name" value="PHOSPHOLIPASE D"/>
    <property type="match status" value="1"/>
</dbReference>
<dbReference type="Pfam" id="PF13091">
    <property type="entry name" value="PLDc_2"/>
    <property type="match status" value="2"/>
</dbReference>
<dbReference type="Pfam" id="PF13396">
    <property type="entry name" value="PLDc_N"/>
    <property type="match status" value="1"/>
</dbReference>
<dbReference type="SMART" id="SM00155">
    <property type="entry name" value="PLDc"/>
    <property type="match status" value="2"/>
</dbReference>
<dbReference type="SUPFAM" id="SSF56024">
    <property type="entry name" value="Phospholipase D/nuclease"/>
    <property type="match status" value="2"/>
</dbReference>
<dbReference type="PROSITE" id="PS50035">
    <property type="entry name" value="PLD"/>
    <property type="match status" value="2"/>
</dbReference>
<evidence type="ECO:0000255" key="1">
    <source>
        <dbReference type="HAMAP-Rule" id="MF_00190"/>
    </source>
</evidence>
<reference key="1">
    <citation type="submission" date="2007-11" db="EMBL/GenBank/DDBJ databases">
        <authorList>
            <consortium name="The Salmonella enterica serovar Arizonae Genome Sequencing Project"/>
            <person name="McClelland M."/>
            <person name="Sanderson E.K."/>
            <person name="Porwollik S."/>
            <person name="Spieth J."/>
            <person name="Clifton W.S."/>
            <person name="Fulton R."/>
            <person name="Chunyan W."/>
            <person name="Wollam A."/>
            <person name="Shah N."/>
            <person name="Pepin K."/>
            <person name="Bhonagiri V."/>
            <person name="Nash W."/>
            <person name="Johnson M."/>
            <person name="Thiruvilangam P."/>
            <person name="Wilson R."/>
        </authorList>
    </citation>
    <scope>NUCLEOTIDE SEQUENCE [LARGE SCALE GENOMIC DNA]</scope>
    <source>
        <strain>ATCC BAA-731 / CDC346-86 / RSK2980</strain>
    </source>
</reference>
<accession>A9MPD5</accession>
<protein>
    <recommendedName>
        <fullName evidence="1">Cardiolipin synthase A</fullName>
        <shortName evidence="1">CL synthase</shortName>
        <ecNumber evidence="1">2.7.8.-</ecNumber>
    </recommendedName>
</protein>
<gene>
    <name evidence="1" type="primary">clsA</name>
    <name type="synonym">cls</name>
    <name type="ordered locus">SARI_01214</name>
</gene>
<feature type="chain" id="PRO_1000077505" description="Cardiolipin synthase A">
    <location>
        <begin position="1"/>
        <end position="486"/>
    </location>
</feature>
<feature type="transmembrane region" description="Helical" evidence="1">
    <location>
        <begin position="3"/>
        <end position="23"/>
    </location>
</feature>
<feature type="transmembrane region" description="Helical" evidence="1">
    <location>
        <begin position="38"/>
        <end position="58"/>
    </location>
</feature>
<feature type="domain" description="PLD phosphodiesterase 1" evidence="1">
    <location>
        <begin position="219"/>
        <end position="246"/>
    </location>
</feature>
<feature type="domain" description="PLD phosphodiesterase 2" evidence="1">
    <location>
        <begin position="399"/>
        <end position="426"/>
    </location>
</feature>
<feature type="active site" evidence="1">
    <location>
        <position position="224"/>
    </location>
</feature>
<feature type="active site" evidence="1">
    <location>
        <position position="226"/>
    </location>
</feature>
<feature type="active site" evidence="1">
    <location>
        <position position="231"/>
    </location>
</feature>
<feature type="active site" evidence="1">
    <location>
        <position position="404"/>
    </location>
</feature>
<feature type="active site" evidence="1">
    <location>
        <position position="406"/>
    </location>
</feature>
<feature type="active site" evidence="1">
    <location>
        <position position="411"/>
    </location>
</feature>
<organism>
    <name type="scientific">Salmonella arizonae (strain ATCC BAA-731 / CDC346-86 / RSK2980)</name>
    <dbReference type="NCBI Taxonomy" id="41514"/>
    <lineage>
        <taxon>Bacteria</taxon>
        <taxon>Pseudomonadati</taxon>
        <taxon>Pseudomonadota</taxon>
        <taxon>Gammaproteobacteria</taxon>
        <taxon>Enterobacterales</taxon>
        <taxon>Enterobacteriaceae</taxon>
        <taxon>Salmonella</taxon>
    </lineage>
</organism>
<name>CLSA_SALAR</name>